<accession>Q88P73</accession>
<keyword id="KW-0031">Aminopeptidase</keyword>
<keyword id="KW-0963">Cytoplasm</keyword>
<keyword id="KW-0378">Hydrolase</keyword>
<keyword id="KW-0464">Manganese</keyword>
<keyword id="KW-0479">Metal-binding</keyword>
<keyword id="KW-0645">Protease</keyword>
<keyword id="KW-1185">Reference proteome</keyword>
<reference key="1">
    <citation type="journal article" date="2002" name="Environ. Microbiol.">
        <title>Complete genome sequence and comparative analysis of the metabolically versatile Pseudomonas putida KT2440.</title>
        <authorList>
            <person name="Nelson K.E."/>
            <person name="Weinel C."/>
            <person name="Paulsen I.T."/>
            <person name="Dodson R.J."/>
            <person name="Hilbert H."/>
            <person name="Martins dos Santos V.A.P."/>
            <person name="Fouts D.E."/>
            <person name="Gill S.R."/>
            <person name="Pop M."/>
            <person name="Holmes M."/>
            <person name="Brinkac L.M."/>
            <person name="Beanan M.J."/>
            <person name="DeBoy R.T."/>
            <person name="Daugherty S.C."/>
            <person name="Kolonay J.F."/>
            <person name="Madupu R."/>
            <person name="Nelson W.C."/>
            <person name="White O."/>
            <person name="Peterson J.D."/>
            <person name="Khouri H.M."/>
            <person name="Hance I."/>
            <person name="Chris Lee P."/>
            <person name="Holtzapple E.K."/>
            <person name="Scanlan D."/>
            <person name="Tran K."/>
            <person name="Moazzez A."/>
            <person name="Utterback T.R."/>
            <person name="Rizzo M."/>
            <person name="Lee K."/>
            <person name="Kosack D."/>
            <person name="Moestl D."/>
            <person name="Wedler H."/>
            <person name="Lauber J."/>
            <person name="Stjepandic D."/>
            <person name="Hoheisel J."/>
            <person name="Straetz M."/>
            <person name="Heim S."/>
            <person name="Kiewitz C."/>
            <person name="Eisen J.A."/>
            <person name="Timmis K.N."/>
            <person name="Duesterhoeft A."/>
            <person name="Tuemmler B."/>
            <person name="Fraser C.M."/>
        </authorList>
    </citation>
    <scope>NUCLEOTIDE SEQUENCE [LARGE SCALE GENOMIC DNA]</scope>
    <source>
        <strain>ATCC 47054 / DSM 6125 / CFBP 8728 / NCIMB 11950 / KT2440</strain>
    </source>
</reference>
<protein>
    <recommendedName>
        <fullName evidence="1">Probable cytosol aminopeptidase</fullName>
        <ecNumber evidence="1">3.4.11.1</ecNumber>
    </recommendedName>
    <alternativeName>
        <fullName evidence="1">Leucine aminopeptidase</fullName>
        <shortName evidence="1">LAP</shortName>
        <ecNumber evidence="1">3.4.11.10</ecNumber>
    </alternativeName>
    <alternativeName>
        <fullName evidence="1">Leucyl aminopeptidase</fullName>
    </alternativeName>
</protein>
<proteinExistence type="inferred from homology"/>
<feature type="chain" id="PRO_0000165784" description="Probable cytosol aminopeptidase">
    <location>
        <begin position="1"/>
        <end position="497"/>
    </location>
</feature>
<feature type="active site" evidence="1">
    <location>
        <position position="279"/>
    </location>
</feature>
<feature type="active site" evidence="1">
    <location>
        <position position="353"/>
    </location>
</feature>
<feature type="binding site" evidence="1">
    <location>
        <position position="267"/>
    </location>
    <ligand>
        <name>Mn(2+)</name>
        <dbReference type="ChEBI" id="CHEBI:29035"/>
        <label>2</label>
    </ligand>
</feature>
<feature type="binding site" evidence="1">
    <location>
        <position position="272"/>
    </location>
    <ligand>
        <name>Mn(2+)</name>
        <dbReference type="ChEBI" id="CHEBI:29035"/>
        <label>1</label>
    </ligand>
</feature>
<feature type="binding site" evidence="1">
    <location>
        <position position="272"/>
    </location>
    <ligand>
        <name>Mn(2+)</name>
        <dbReference type="ChEBI" id="CHEBI:29035"/>
        <label>2</label>
    </ligand>
</feature>
<feature type="binding site" evidence="1">
    <location>
        <position position="290"/>
    </location>
    <ligand>
        <name>Mn(2+)</name>
        <dbReference type="ChEBI" id="CHEBI:29035"/>
        <label>2</label>
    </ligand>
</feature>
<feature type="binding site" evidence="1">
    <location>
        <position position="349"/>
    </location>
    <ligand>
        <name>Mn(2+)</name>
        <dbReference type="ChEBI" id="CHEBI:29035"/>
        <label>1</label>
    </ligand>
</feature>
<feature type="binding site" evidence="1">
    <location>
        <position position="351"/>
    </location>
    <ligand>
        <name>Mn(2+)</name>
        <dbReference type="ChEBI" id="CHEBI:29035"/>
        <label>1</label>
    </ligand>
</feature>
<feature type="binding site" evidence="1">
    <location>
        <position position="351"/>
    </location>
    <ligand>
        <name>Mn(2+)</name>
        <dbReference type="ChEBI" id="CHEBI:29035"/>
        <label>2</label>
    </ligand>
</feature>
<comment type="function">
    <text evidence="1">Presumably involved in the processing and regular turnover of intracellular proteins. Catalyzes the removal of unsubstituted N-terminal amino acids from various peptides.</text>
</comment>
<comment type="catalytic activity">
    <reaction evidence="1">
        <text>Release of an N-terminal amino acid, Xaa-|-Yaa-, in which Xaa is preferably Leu, but may be other amino acids including Pro although not Arg or Lys, and Yaa may be Pro. Amino acid amides and methyl esters are also readily hydrolyzed, but rates on arylamides are exceedingly low.</text>
        <dbReference type="EC" id="3.4.11.1"/>
    </reaction>
</comment>
<comment type="catalytic activity">
    <reaction evidence="1">
        <text>Release of an N-terminal amino acid, preferentially leucine, but not glutamic or aspartic acids.</text>
        <dbReference type="EC" id="3.4.11.10"/>
    </reaction>
</comment>
<comment type="cofactor">
    <cofactor evidence="1">
        <name>Mn(2+)</name>
        <dbReference type="ChEBI" id="CHEBI:29035"/>
    </cofactor>
    <text evidence="1">Binds 2 manganese ions per subunit.</text>
</comment>
<comment type="subcellular location">
    <subcellularLocation>
        <location evidence="1">Cytoplasm</location>
    </subcellularLocation>
</comment>
<comment type="similarity">
    <text evidence="1">Belongs to the peptidase M17 family.</text>
</comment>
<dbReference type="EC" id="3.4.11.1" evidence="1"/>
<dbReference type="EC" id="3.4.11.10" evidence="1"/>
<dbReference type="EMBL" id="AE015451">
    <property type="protein sequence ID" value="AAN66605.1"/>
    <property type="molecule type" value="Genomic_DNA"/>
</dbReference>
<dbReference type="RefSeq" id="NP_743141.1">
    <property type="nucleotide sequence ID" value="NC_002947.4"/>
</dbReference>
<dbReference type="RefSeq" id="WP_010952169.1">
    <property type="nucleotide sequence ID" value="NZ_CP169744.1"/>
</dbReference>
<dbReference type="SMR" id="Q88P73"/>
<dbReference type="STRING" id="160488.PP_0980"/>
<dbReference type="MEROPS" id="M17.003"/>
<dbReference type="PaxDb" id="160488-PP_0980"/>
<dbReference type="KEGG" id="ppu:PP_0980"/>
<dbReference type="PATRIC" id="fig|160488.4.peg.1041"/>
<dbReference type="eggNOG" id="COG0260">
    <property type="taxonomic scope" value="Bacteria"/>
</dbReference>
<dbReference type="HOGENOM" id="CLU_013734_2_2_6"/>
<dbReference type="OrthoDB" id="9809354at2"/>
<dbReference type="PhylomeDB" id="Q88P73"/>
<dbReference type="BioCyc" id="PPUT160488:G1G01-1053-MONOMER"/>
<dbReference type="Proteomes" id="UP000000556">
    <property type="component" value="Chromosome"/>
</dbReference>
<dbReference type="GO" id="GO:0005737">
    <property type="term" value="C:cytoplasm"/>
    <property type="evidence" value="ECO:0007669"/>
    <property type="project" value="UniProtKB-SubCell"/>
</dbReference>
<dbReference type="GO" id="GO:0030145">
    <property type="term" value="F:manganese ion binding"/>
    <property type="evidence" value="ECO:0007669"/>
    <property type="project" value="UniProtKB-UniRule"/>
</dbReference>
<dbReference type="GO" id="GO:0070006">
    <property type="term" value="F:metalloaminopeptidase activity"/>
    <property type="evidence" value="ECO:0007669"/>
    <property type="project" value="InterPro"/>
</dbReference>
<dbReference type="GO" id="GO:0006508">
    <property type="term" value="P:proteolysis"/>
    <property type="evidence" value="ECO:0007669"/>
    <property type="project" value="UniProtKB-KW"/>
</dbReference>
<dbReference type="CDD" id="cd00433">
    <property type="entry name" value="Peptidase_M17"/>
    <property type="match status" value="1"/>
</dbReference>
<dbReference type="FunFam" id="3.40.630.10:FF:000004">
    <property type="entry name" value="Probable cytosol aminopeptidase"/>
    <property type="match status" value="1"/>
</dbReference>
<dbReference type="Gene3D" id="3.40.220.10">
    <property type="entry name" value="Leucine Aminopeptidase, subunit E, domain 1"/>
    <property type="match status" value="1"/>
</dbReference>
<dbReference type="Gene3D" id="3.40.630.10">
    <property type="entry name" value="Zn peptidases"/>
    <property type="match status" value="1"/>
</dbReference>
<dbReference type="HAMAP" id="MF_00181">
    <property type="entry name" value="Cytosol_peptidase_M17"/>
    <property type="match status" value="1"/>
</dbReference>
<dbReference type="InterPro" id="IPR011356">
    <property type="entry name" value="Leucine_aapep/pepB"/>
</dbReference>
<dbReference type="InterPro" id="IPR043472">
    <property type="entry name" value="Macro_dom-like"/>
</dbReference>
<dbReference type="InterPro" id="IPR000819">
    <property type="entry name" value="Peptidase_M17_C"/>
</dbReference>
<dbReference type="InterPro" id="IPR023042">
    <property type="entry name" value="Peptidase_M17_leu_NH2_pept"/>
</dbReference>
<dbReference type="InterPro" id="IPR008283">
    <property type="entry name" value="Peptidase_M17_N"/>
</dbReference>
<dbReference type="NCBIfam" id="NF002073">
    <property type="entry name" value="PRK00913.1-2"/>
    <property type="match status" value="1"/>
</dbReference>
<dbReference type="NCBIfam" id="NF002074">
    <property type="entry name" value="PRK00913.1-4"/>
    <property type="match status" value="1"/>
</dbReference>
<dbReference type="NCBIfam" id="NF002077">
    <property type="entry name" value="PRK00913.2-4"/>
    <property type="match status" value="1"/>
</dbReference>
<dbReference type="PANTHER" id="PTHR11963:SF23">
    <property type="entry name" value="CYTOSOL AMINOPEPTIDASE"/>
    <property type="match status" value="1"/>
</dbReference>
<dbReference type="PANTHER" id="PTHR11963">
    <property type="entry name" value="LEUCINE AMINOPEPTIDASE-RELATED"/>
    <property type="match status" value="1"/>
</dbReference>
<dbReference type="Pfam" id="PF00883">
    <property type="entry name" value="Peptidase_M17"/>
    <property type="match status" value="1"/>
</dbReference>
<dbReference type="Pfam" id="PF02789">
    <property type="entry name" value="Peptidase_M17_N"/>
    <property type="match status" value="1"/>
</dbReference>
<dbReference type="PRINTS" id="PR00481">
    <property type="entry name" value="LAMNOPPTDASE"/>
</dbReference>
<dbReference type="SUPFAM" id="SSF52949">
    <property type="entry name" value="Macro domain-like"/>
    <property type="match status" value="1"/>
</dbReference>
<dbReference type="SUPFAM" id="SSF53187">
    <property type="entry name" value="Zn-dependent exopeptidases"/>
    <property type="match status" value="1"/>
</dbReference>
<dbReference type="PROSITE" id="PS00631">
    <property type="entry name" value="CYTOSOL_AP"/>
    <property type="match status" value="1"/>
</dbReference>
<organism>
    <name type="scientific">Pseudomonas putida (strain ATCC 47054 / DSM 6125 / CFBP 8728 / NCIMB 11950 / KT2440)</name>
    <dbReference type="NCBI Taxonomy" id="160488"/>
    <lineage>
        <taxon>Bacteria</taxon>
        <taxon>Pseudomonadati</taxon>
        <taxon>Pseudomonadota</taxon>
        <taxon>Gammaproteobacteria</taxon>
        <taxon>Pseudomonadales</taxon>
        <taxon>Pseudomonadaceae</taxon>
        <taxon>Pseudomonas</taxon>
    </lineage>
</organism>
<gene>
    <name evidence="1" type="primary">pepA</name>
    <name type="ordered locus">PP_0980</name>
</gene>
<name>AMPA_PSEPK</name>
<evidence type="ECO:0000255" key="1">
    <source>
        <dbReference type="HAMAP-Rule" id="MF_00181"/>
    </source>
</evidence>
<sequence>MELVVKSVAAASVKTATLVLPVGENRKLGTVAQAVDQACEGAISAVLKRGDLAGKPGQTLLLQNLSGLKAERVLLVGSGKEEALGDRAWRKLVASVAGVLKGLNGADAVLALDDIAVSNRDAHYGKYRLLAETLLDGEYVFDRFKSQKAEPRALKKVTLLADKAGQAEVERAVKHASAIASGMAFTRDLGNLPPNLCHPSYLAEQAKELGKAHKALKVEVLDEKKIKDLGMGAFYAVGQGSDQPPRLIVLNYQGGKKADKPFVLVGKGITFDTGGISLKPGAGMDEMKYDMCGAASVFGTLRAVLELQLPINLVCLLACAENMPSGGATRPGDIVTTMSGQTVEILNTDAEGRLVLCDTLTYAERFKPQAVIDIATLTGACIVALGSHTSGLMGNNDDLVGQLLDAGKRADDRAWQLPLFEEYQEQLDSPFADMGNIGGPKAGTITAGCFLSRFAKAYNWAHMDIAGTAWVSGGKDKGATGRPVPLLTQYLLDRAGA</sequence>